<sequence length="318" mass="33274">MRPVEVLGKRWAHPIACASGALAAHRPGMENAVLRGAAAIFTKTVTESPREGHPGPVFVDYLDEGYALNAMGLPNPGPDRMVVEIEEFRDEFDVPVYASVAADGPEGFKRLARAFSGVADGLELNVSCPHAGKGYGAELGSDPEAVAEITEAAVRAFDGPVSVKLTPNVDRETLLEVAAAAIDAGAEALTAVNTLGPGLRIDLRTASPVLGAGVGGLSGPALKPIALRVVADLALEFGEEVEIIGVGGIRNGEDVVEFLFAGAKAVQVATAAREKDFGDIAMETSHILKELGYDGPEEAIGAALPEYRERLRRLGWCQ</sequence>
<reference key="1">
    <citation type="journal article" date="2002" name="Proc. Natl. Acad. Sci. U.S.A.">
        <title>The complete genome of hyperthermophile Methanopyrus kandleri AV19 and monophyly of archaeal methanogens.</title>
        <authorList>
            <person name="Slesarev A.I."/>
            <person name="Mezhevaya K.V."/>
            <person name="Makarova K.S."/>
            <person name="Polushin N.N."/>
            <person name="Shcherbinina O.V."/>
            <person name="Shakhova V.V."/>
            <person name="Belova G.I."/>
            <person name="Aravind L."/>
            <person name="Natale D.A."/>
            <person name="Rogozin I.B."/>
            <person name="Tatusov R.L."/>
            <person name="Wolf Y.I."/>
            <person name="Stetter K.O."/>
            <person name="Malykh A.G."/>
            <person name="Koonin E.V."/>
            <person name="Kozyavkin S.A."/>
        </authorList>
    </citation>
    <scope>NUCLEOTIDE SEQUENCE [LARGE SCALE GENOMIC DNA]</scope>
    <source>
        <strain>AV19 / DSM 6324 / JCM 9639 / NBRC 100938</strain>
    </source>
</reference>
<organism>
    <name type="scientific">Methanopyrus kandleri (strain AV19 / DSM 6324 / JCM 9639 / NBRC 100938)</name>
    <dbReference type="NCBI Taxonomy" id="190192"/>
    <lineage>
        <taxon>Archaea</taxon>
        <taxon>Methanobacteriati</taxon>
        <taxon>Methanobacteriota</taxon>
        <taxon>Methanomada group</taxon>
        <taxon>Methanopyri</taxon>
        <taxon>Methanopyrales</taxon>
        <taxon>Methanopyraceae</taxon>
        <taxon>Methanopyrus</taxon>
    </lineage>
</organism>
<gene>
    <name type="primary">pyrD</name>
    <name type="ordered locus">MK0563</name>
</gene>
<feature type="chain" id="PRO_0000409557" description="Dihydroorotate dehydrogenase B (NAD(+)), catalytic subunit">
    <location>
        <begin position="1"/>
        <end position="318"/>
    </location>
</feature>
<feature type="active site" description="Nucleophile">
    <location>
        <position position="128"/>
    </location>
</feature>
<feature type="binding site" evidence="1">
    <location>
        <position position="19"/>
    </location>
    <ligand>
        <name>FMN</name>
        <dbReference type="ChEBI" id="CHEBI:58210"/>
    </ligand>
</feature>
<feature type="binding site" evidence="1">
    <location>
        <begin position="43"/>
        <end position="44"/>
    </location>
    <ligand>
        <name>FMN</name>
        <dbReference type="ChEBI" id="CHEBI:58210"/>
    </ligand>
</feature>
<feature type="binding site" evidence="1">
    <location>
        <position position="43"/>
    </location>
    <ligand>
        <name>substrate</name>
    </ligand>
</feature>
<feature type="binding site" evidence="1">
    <location>
        <begin position="69"/>
        <end position="73"/>
    </location>
    <ligand>
        <name>substrate</name>
    </ligand>
</feature>
<feature type="binding site" evidence="1">
    <location>
        <position position="125"/>
    </location>
    <ligand>
        <name>FMN</name>
        <dbReference type="ChEBI" id="CHEBI:58210"/>
    </ligand>
</feature>
<feature type="binding site" evidence="1">
    <location>
        <position position="125"/>
    </location>
    <ligand>
        <name>substrate</name>
    </ligand>
</feature>
<feature type="binding site" evidence="1">
    <location>
        <position position="164"/>
    </location>
    <ligand>
        <name>FMN</name>
        <dbReference type="ChEBI" id="CHEBI:58210"/>
    </ligand>
</feature>
<feature type="binding site" evidence="1">
    <location>
        <position position="192"/>
    </location>
    <ligand>
        <name>FMN</name>
        <dbReference type="ChEBI" id="CHEBI:58210"/>
    </ligand>
</feature>
<feature type="binding site" evidence="1">
    <location>
        <begin position="193"/>
        <end position="194"/>
    </location>
    <ligand>
        <name>substrate</name>
    </ligand>
</feature>
<feature type="binding site" evidence="1">
    <location>
        <position position="219"/>
    </location>
    <ligand>
        <name>FMN</name>
        <dbReference type="ChEBI" id="CHEBI:58210"/>
    </ligand>
</feature>
<feature type="binding site" evidence="1">
    <location>
        <begin position="247"/>
        <end position="248"/>
    </location>
    <ligand>
        <name>FMN</name>
        <dbReference type="ChEBI" id="CHEBI:58210"/>
    </ligand>
</feature>
<feature type="binding site" evidence="1">
    <location>
        <begin position="269"/>
        <end position="270"/>
    </location>
    <ligand>
        <name>FMN</name>
        <dbReference type="ChEBI" id="CHEBI:58210"/>
    </ligand>
</feature>
<protein>
    <recommendedName>
        <fullName>Dihydroorotate dehydrogenase B (NAD(+)), catalytic subunit</fullName>
        <shortName>DHOD B</shortName>
        <shortName>DHODase B</shortName>
        <shortName>DHOdehase B</shortName>
        <ecNumber>1.3.1.14</ecNumber>
    </recommendedName>
    <alternativeName>
        <fullName>Dihydroorotate oxidase B</fullName>
    </alternativeName>
    <alternativeName>
        <fullName>Orotate reductase (NADH)</fullName>
    </alternativeName>
</protein>
<keyword id="KW-0963">Cytoplasm</keyword>
<keyword id="KW-0285">Flavoprotein</keyword>
<keyword id="KW-0288">FMN</keyword>
<keyword id="KW-0520">NAD</keyword>
<keyword id="KW-0560">Oxidoreductase</keyword>
<keyword id="KW-0665">Pyrimidine biosynthesis</keyword>
<keyword id="KW-1185">Reference proteome</keyword>
<evidence type="ECO:0000250" key="1"/>
<evidence type="ECO:0000305" key="2"/>
<comment type="function">
    <text evidence="1">Catalyzes the conversion of dihydroorotate to orotate with NAD(+) as electron acceptor.</text>
</comment>
<comment type="catalytic activity">
    <reaction>
        <text>(S)-dihydroorotate + NAD(+) = orotate + NADH + H(+)</text>
        <dbReference type="Rhea" id="RHEA:13513"/>
        <dbReference type="ChEBI" id="CHEBI:15378"/>
        <dbReference type="ChEBI" id="CHEBI:30839"/>
        <dbReference type="ChEBI" id="CHEBI:30864"/>
        <dbReference type="ChEBI" id="CHEBI:57540"/>
        <dbReference type="ChEBI" id="CHEBI:57945"/>
        <dbReference type="EC" id="1.3.1.14"/>
    </reaction>
</comment>
<comment type="cofactor">
    <cofactor evidence="1">
        <name>FMN</name>
        <dbReference type="ChEBI" id="CHEBI:58210"/>
    </cofactor>
    <text evidence="1">Binds 1 FMN per subunit.</text>
</comment>
<comment type="pathway">
    <text>Pyrimidine metabolism; UMP biosynthesis via de novo pathway; orotate from (S)-dihydroorotate (NAD(+) route): step 1/1.</text>
</comment>
<comment type="subunit">
    <text evidence="1">Heterotetramer of 2 PyrK and 2 PyrD type B subunits.</text>
</comment>
<comment type="subcellular location">
    <subcellularLocation>
        <location evidence="1">Cytoplasm</location>
    </subcellularLocation>
</comment>
<comment type="similarity">
    <text evidence="2">Belongs to the dihydroorotate dehydrogenase family. Type 1 subfamily.</text>
</comment>
<proteinExistence type="inferred from homology"/>
<accession>Q8TXU6</accession>
<name>PYRDB_METKA</name>
<dbReference type="EC" id="1.3.1.14"/>
<dbReference type="EMBL" id="AE009439">
    <property type="protein sequence ID" value="AAM01778.1"/>
    <property type="molecule type" value="Genomic_DNA"/>
</dbReference>
<dbReference type="RefSeq" id="WP_011018933.1">
    <property type="nucleotide sequence ID" value="NC_003551.1"/>
</dbReference>
<dbReference type="SMR" id="Q8TXU6"/>
<dbReference type="FunCoup" id="Q8TXU6">
    <property type="interactions" value="212"/>
</dbReference>
<dbReference type="STRING" id="190192.MK0563"/>
<dbReference type="PaxDb" id="190192-MK0563"/>
<dbReference type="EnsemblBacteria" id="AAM01778">
    <property type="protein sequence ID" value="AAM01778"/>
    <property type="gene ID" value="MK0563"/>
</dbReference>
<dbReference type="GeneID" id="1476664"/>
<dbReference type="KEGG" id="mka:MK0563"/>
<dbReference type="PATRIC" id="fig|190192.8.peg.598"/>
<dbReference type="HOGENOM" id="CLU_042042_0_0_2"/>
<dbReference type="InParanoid" id="Q8TXU6"/>
<dbReference type="OrthoDB" id="36608at2157"/>
<dbReference type="UniPathway" id="UPA00070">
    <property type="reaction ID" value="UER00945"/>
</dbReference>
<dbReference type="Proteomes" id="UP000001826">
    <property type="component" value="Chromosome"/>
</dbReference>
<dbReference type="GO" id="GO:0005737">
    <property type="term" value="C:cytoplasm"/>
    <property type="evidence" value="ECO:0007669"/>
    <property type="project" value="UniProtKB-SubCell"/>
</dbReference>
<dbReference type="GO" id="GO:0004589">
    <property type="term" value="F:dihydroorotate dehydrogenase (NAD+) activity"/>
    <property type="evidence" value="ECO:0007669"/>
    <property type="project" value="UniProtKB-EC"/>
</dbReference>
<dbReference type="GO" id="GO:0006207">
    <property type="term" value="P:'de novo' pyrimidine nucleobase biosynthetic process"/>
    <property type="evidence" value="ECO:0007669"/>
    <property type="project" value="InterPro"/>
</dbReference>
<dbReference type="GO" id="GO:0044205">
    <property type="term" value="P:'de novo' UMP biosynthetic process"/>
    <property type="evidence" value="ECO:0007669"/>
    <property type="project" value="UniProtKB-UniRule"/>
</dbReference>
<dbReference type="CDD" id="cd04740">
    <property type="entry name" value="DHOD_1B_like"/>
    <property type="match status" value="1"/>
</dbReference>
<dbReference type="Gene3D" id="3.20.20.70">
    <property type="entry name" value="Aldolase class I"/>
    <property type="match status" value="1"/>
</dbReference>
<dbReference type="Gene3D" id="2.30.26.10">
    <property type="entry name" value="Dihydroorotate Dehydrogenase A, chain A, domain 2"/>
    <property type="match status" value="1"/>
</dbReference>
<dbReference type="HAMAP" id="MF_00224">
    <property type="entry name" value="DHO_dh_type1"/>
    <property type="match status" value="1"/>
</dbReference>
<dbReference type="InterPro" id="IPR013785">
    <property type="entry name" value="Aldolase_TIM"/>
</dbReference>
<dbReference type="InterPro" id="IPR050074">
    <property type="entry name" value="DHO_dehydrogenase"/>
</dbReference>
<dbReference type="InterPro" id="IPR033888">
    <property type="entry name" value="DHOD_1B"/>
</dbReference>
<dbReference type="InterPro" id="IPR023359">
    <property type="entry name" value="Dihydro_DH_chainA_dom2"/>
</dbReference>
<dbReference type="InterPro" id="IPR024920">
    <property type="entry name" value="Dihydroorotate_DH_1"/>
</dbReference>
<dbReference type="InterPro" id="IPR012135">
    <property type="entry name" value="Dihydroorotate_DH_1_2"/>
</dbReference>
<dbReference type="InterPro" id="IPR005720">
    <property type="entry name" value="Dihydroorotate_DH_cat"/>
</dbReference>
<dbReference type="InterPro" id="IPR001295">
    <property type="entry name" value="Dihydroorotate_DH_CS"/>
</dbReference>
<dbReference type="PANTHER" id="PTHR48109:SF1">
    <property type="entry name" value="DIHYDROOROTATE DEHYDROGENASE (FUMARATE)"/>
    <property type="match status" value="1"/>
</dbReference>
<dbReference type="PANTHER" id="PTHR48109">
    <property type="entry name" value="DIHYDROOROTATE DEHYDROGENASE (QUINONE), MITOCHONDRIAL-RELATED"/>
    <property type="match status" value="1"/>
</dbReference>
<dbReference type="Pfam" id="PF01180">
    <property type="entry name" value="DHO_dh"/>
    <property type="match status" value="1"/>
</dbReference>
<dbReference type="PIRSF" id="PIRSF000164">
    <property type="entry name" value="DHO_oxidase"/>
    <property type="match status" value="1"/>
</dbReference>
<dbReference type="SUPFAM" id="SSF51395">
    <property type="entry name" value="FMN-linked oxidoreductases"/>
    <property type="match status" value="1"/>
</dbReference>
<dbReference type="PROSITE" id="PS00911">
    <property type="entry name" value="DHODEHASE_1"/>
    <property type="match status" value="1"/>
</dbReference>
<dbReference type="PROSITE" id="PS00912">
    <property type="entry name" value="DHODEHASE_2"/>
    <property type="match status" value="1"/>
</dbReference>